<gene>
    <name evidence="1" type="primary">pyrH</name>
    <name type="ordered locus">Maqu_2546</name>
</gene>
<accession>A1U3Q2</accession>
<organism>
    <name type="scientific">Marinobacter nauticus (strain ATCC 700491 / DSM 11845 / VT8)</name>
    <name type="common">Marinobacter aquaeolei</name>
    <dbReference type="NCBI Taxonomy" id="351348"/>
    <lineage>
        <taxon>Bacteria</taxon>
        <taxon>Pseudomonadati</taxon>
        <taxon>Pseudomonadota</taxon>
        <taxon>Gammaproteobacteria</taxon>
        <taxon>Pseudomonadales</taxon>
        <taxon>Marinobacteraceae</taxon>
        <taxon>Marinobacter</taxon>
    </lineage>
</organism>
<comment type="function">
    <text evidence="1">Catalyzes the reversible phosphorylation of UMP to UDP.</text>
</comment>
<comment type="catalytic activity">
    <reaction evidence="1">
        <text>UMP + ATP = UDP + ADP</text>
        <dbReference type="Rhea" id="RHEA:24400"/>
        <dbReference type="ChEBI" id="CHEBI:30616"/>
        <dbReference type="ChEBI" id="CHEBI:57865"/>
        <dbReference type="ChEBI" id="CHEBI:58223"/>
        <dbReference type="ChEBI" id="CHEBI:456216"/>
        <dbReference type="EC" id="2.7.4.22"/>
    </reaction>
</comment>
<comment type="activity regulation">
    <text evidence="1">Inhibited by UTP.</text>
</comment>
<comment type="pathway">
    <text evidence="1">Pyrimidine metabolism; CTP biosynthesis via de novo pathway; UDP from UMP (UMPK route): step 1/1.</text>
</comment>
<comment type="subunit">
    <text evidence="1">Homohexamer.</text>
</comment>
<comment type="subcellular location">
    <subcellularLocation>
        <location evidence="1">Cytoplasm</location>
    </subcellularLocation>
</comment>
<comment type="similarity">
    <text evidence="1">Belongs to the UMP kinase family.</text>
</comment>
<sequence length="242" mass="26204">MPTSSKNQPRYKRVLLKLSGEALMGEHDFGIDPKVLDRMALEIGALIGIGVQVGLVIGGGNLFRGAALNAAGLDRVTGDHMGMLATVMNGLAMRDALERSNIRTRVMSAIPMSGIVEHYDRRRAVRDLKEGDVVIFSAGTGNPFFTTDSAACLRGIEIEADAVLKATKVDGVYSADPHLDPTAVKYDHLTYDEVLDKKLGVMDLTAICLARDHGMPLRVFDMNRPGVLTRIVTGEREGTLIE</sequence>
<proteinExistence type="inferred from homology"/>
<feature type="chain" id="PRO_0000323881" description="Uridylate kinase">
    <location>
        <begin position="1"/>
        <end position="242"/>
    </location>
</feature>
<feature type="binding site" evidence="1">
    <location>
        <begin position="17"/>
        <end position="20"/>
    </location>
    <ligand>
        <name>ATP</name>
        <dbReference type="ChEBI" id="CHEBI:30616"/>
    </ligand>
</feature>
<feature type="binding site" evidence="1">
    <location>
        <position position="59"/>
    </location>
    <ligand>
        <name>UMP</name>
        <dbReference type="ChEBI" id="CHEBI:57865"/>
    </ligand>
</feature>
<feature type="binding site" evidence="1">
    <location>
        <position position="60"/>
    </location>
    <ligand>
        <name>ATP</name>
        <dbReference type="ChEBI" id="CHEBI:30616"/>
    </ligand>
</feature>
<feature type="binding site" evidence="1">
    <location>
        <position position="64"/>
    </location>
    <ligand>
        <name>ATP</name>
        <dbReference type="ChEBI" id="CHEBI:30616"/>
    </ligand>
</feature>
<feature type="binding site" evidence="1">
    <location>
        <position position="79"/>
    </location>
    <ligand>
        <name>UMP</name>
        <dbReference type="ChEBI" id="CHEBI:57865"/>
    </ligand>
</feature>
<feature type="binding site" evidence="1">
    <location>
        <begin position="140"/>
        <end position="147"/>
    </location>
    <ligand>
        <name>UMP</name>
        <dbReference type="ChEBI" id="CHEBI:57865"/>
    </ligand>
</feature>
<feature type="binding site" evidence="1">
    <location>
        <position position="167"/>
    </location>
    <ligand>
        <name>ATP</name>
        <dbReference type="ChEBI" id="CHEBI:30616"/>
    </ligand>
</feature>
<feature type="binding site" evidence="1">
    <location>
        <position position="173"/>
    </location>
    <ligand>
        <name>ATP</name>
        <dbReference type="ChEBI" id="CHEBI:30616"/>
    </ligand>
</feature>
<feature type="binding site" evidence="1">
    <location>
        <position position="176"/>
    </location>
    <ligand>
        <name>ATP</name>
        <dbReference type="ChEBI" id="CHEBI:30616"/>
    </ligand>
</feature>
<protein>
    <recommendedName>
        <fullName evidence="1">Uridylate kinase</fullName>
        <shortName evidence="1">UK</shortName>
        <ecNumber evidence="1">2.7.4.22</ecNumber>
    </recommendedName>
    <alternativeName>
        <fullName evidence="1">Uridine monophosphate kinase</fullName>
        <shortName evidence="1">UMP kinase</shortName>
        <shortName evidence="1">UMPK</shortName>
    </alternativeName>
</protein>
<evidence type="ECO:0000255" key="1">
    <source>
        <dbReference type="HAMAP-Rule" id="MF_01220"/>
    </source>
</evidence>
<reference key="1">
    <citation type="journal article" date="2011" name="Appl. Environ. Microbiol.">
        <title>Genomic potential of Marinobacter aquaeolei, a biogeochemical 'opportunitroph'.</title>
        <authorList>
            <person name="Singer E."/>
            <person name="Webb E.A."/>
            <person name="Nelson W.C."/>
            <person name="Heidelberg J.F."/>
            <person name="Ivanova N."/>
            <person name="Pati A."/>
            <person name="Edwards K.J."/>
        </authorList>
    </citation>
    <scope>NUCLEOTIDE SEQUENCE [LARGE SCALE GENOMIC DNA]</scope>
    <source>
        <strain>ATCC 700491 / DSM 11845 / VT8</strain>
    </source>
</reference>
<keyword id="KW-0067">ATP-binding</keyword>
<keyword id="KW-0963">Cytoplasm</keyword>
<keyword id="KW-0418">Kinase</keyword>
<keyword id="KW-0547">Nucleotide-binding</keyword>
<keyword id="KW-0665">Pyrimidine biosynthesis</keyword>
<keyword id="KW-0808">Transferase</keyword>
<name>PYRH_MARN8</name>
<dbReference type="EC" id="2.7.4.22" evidence="1"/>
<dbReference type="EMBL" id="CP000514">
    <property type="protein sequence ID" value="ABM19621.1"/>
    <property type="molecule type" value="Genomic_DNA"/>
</dbReference>
<dbReference type="RefSeq" id="WP_011786005.1">
    <property type="nucleotide sequence ID" value="NC_008740.1"/>
</dbReference>
<dbReference type="SMR" id="A1U3Q2"/>
<dbReference type="STRING" id="351348.Maqu_2546"/>
<dbReference type="GeneID" id="31821870"/>
<dbReference type="KEGG" id="maq:Maqu_2546"/>
<dbReference type="eggNOG" id="COG0528">
    <property type="taxonomic scope" value="Bacteria"/>
</dbReference>
<dbReference type="HOGENOM" id="CLU_033861_0_0_6"/>
<dbReference type="OrthoDB" id="9807458at2"/>
<dbReference type="UniPathway" id="UPA00159">
    <property type="reaction ID" value="UER00275"/>
</dbReference>
<dbReference type="Proteomes" id="UP000000998">
    <property type="component" value="Chromosome"/>
</dbReference>
<dbReference type="GO" id="GO:0005829">
    <property type="term" value="C:cytosol"/>
    <property type="evidence" value="ECO:0007669"/>
    <property type="project" value="TreeGrafter"/>
</dbReference>
<dbReference type="GO" id="GO:0005524">
    <property type="term" value="F:ATP binding"/>
    <property type="evidence" value="ECO:0007669"/>
    <property type="project" value="UniProtKB-KW"/>
</dbReference>
<dbReference type="GO" id="GO:0033862">
    <property type="term" value="F:UMP kinase activity"/>
    <property type="evidence" value="ECO:0007669"/>
    <property type="project" value="UniProtKB-EC"/>
</dbReference>
<dbReference type="GO" id="GO:0044210">
    <property type="term" value="P:'de novo' CTP biosynthetic process"/>
    <property type="evidence" value="ECO:0007669"/>
    <property type="project" value="UniProtKB-UniRule"/>
</dbReference>
<dbReference type="GO" id="GO:0006225">
    <property type="term" value="P:UDP biosynthetic process"/>
    <property type="evidence" value="ECO:0007669"/>
    <property type="project" value="TreeGrafter"/>
</dbReference>
<dbReference type="CDD" id="cd04254">
    <property type="entry name" value="AAK_UMPK-PyrH-Ec"/>
    <property type="match status" value="1"/>
</dbReference>
<dbReference type="FunFam" id="3.40.1160.10:FF:000001">
    <property type="entry name" value="Uridylate kinase"/>
    <property type="match status" value="1"/>
</dbReference>
<dbReference type="Gene3D" id="3.40.1160.10">
    <property type="entry name" value="Acetylglutamate kinase-like"/>
    <property type="match status" value="1"/>
</dbReference>
<dbReference type="HAMAP" id="MF_01220_B">
    <property type="entry name" value="PyrH_B"/>
    <property type="match status" value="1"/>
</dbReference>
<dbReference type="InterPro" id="IPR036393">
    <property type="entry name" value="AceGlu_kinase-like_sf"/>
</dbReference>
<dbReference type="InterPro" id="IPR001048">
    <property type="entry name" value="Asp/Glu/Uridylate_kinase"/>
</dbReference>
<dbReference type="InterPro" id="IPR011817">
    <property type="entry name" value="Uridylate_kinase"/>
</dbReference>
<dbReference type="InterPro" id="IPR015963">
    <property type="entry name" value="Uridylate_kinase_bac"/>
</dbReference>
<dbReference type="NCBIfam" id="TIGR02075">
    <property type="entry name" value="pyrH_bact"/>
    <property type="match status" value="1"/>
</dbReference>
<dbReference type="PANTHER" id="PTHR42833">
    <property type="entry name" value="URIDYLATE KINASE"/>
    <property type="match status" value="1"/>
</dbReference>
<dbReference type="PANTHER" id="PTHR42833:SF4">
    <property type="entry name" value="URIDYLATE KINASE PUMPKIN, CHLOROPLASTIC"/>
    <property type="match status" value="1"/>
</dbReference>
<dbReference type="Pfam" id="PF00696">
    <property type="entry name" value="AA_kinase"/>
    <property type="match status" value="1"/>
</dbReference>
<dbReference type="PIRSF" id="PIRSF005650">
    <property type="entry name" value="Uridylate_kin"/>
    <property type="match status" value="1"/>
</dbReference>
<dbReference type="SUPFAM" id="SSF53633">
    <property type="entry name" value="Carbamate kinase-like"/>
    <property type="match status" value="1"/>
</dbReference>